<name>TIM23_YEAST</name>
<protein>
    <recommendedName>
        <fullName>Mitochondrial import inner membrane translocase subunit TIM23</fullName>
    </recommendedName>
    <alternativeName>
        <fullName>Membrane import machinery protein MIM23</fullName>
    </alternativeName>
    <alternativeName>
        <fullName>Mitochondrial protein import protein 3</fullName>
    </alternativeName>
    <alternativeName>
        <fullName>Mitochondrial protein import protein MAS6</fullName>
    </alternativeName>
</protein>
<comment type="function">
    <text>Essential component of the TIM23 complex, a complex that mediates the translocation of transit peptide-containing proteins across the mitochondrial inner membrane.</text>
</comment>
<comment type="subunit">
    <text evidence="4">Component of the TIM23 complex, at least composed of TIM23, TIM17, TIM50 and TIM21. The complex interacts with the TIM44 component of the PAM complex.</text>
</comment>
<comment type="interaction">
    <interactant intactId="EBI-9136">
        <id>P32897</id>
    </interactant>
    <interactant intactId="EBI-26019">
        <id>P42949</id>
        <label>PAM16</label>
    </interactant>
    <organismsDiffer>false</organismsDiffer>
    <experiments>6</experiments>
</comment>
<comment type="interaction">
    <interactant intactId="EBI-9136">
        <id>P32897</id>
    </interactant>
    <interactant intactId="EBI-9127">
        <id>P39515</id>
        <label>TIM17</label>
    </interactant>
    <organismsDiffer>false</organismsDiffer>
    <experiments>14</experiments>
</comment>
<comment type="interaction">
    <interactant intactId="EBI-9136">
        <id>P32897</id>
    </interactant>
    <interactant intactId="EBI-23128">
        <id>P53220</id>
        <label>TIM21</label>
    </interactant>
    <organismsDiffer>false</organismsDiffer>
    <experiments>16</experiments>
</comment>
<comment type="interaction">
    <interactant intactId="EBI-9136">
        <id>P32897</id>
    </interactant>
    <interactant intactId="EBI-9141">
        <id>Q01852</id>
        <label>TIM44</label>
    </interactant>
    <organismsDiffer>false</organismsDiffer>
    <experiments>8</experiments>
</comment>
<comment type="interaction">
    <interactant intactId="EBI-9136">
        <id>P32897</id>
    </interactant>
    <interactant intactId="EBI-30302">
        <id>Q02776</id>
        <label>TIM50</label>
    </interactant>
    <organismsDiffer>false</organismsDiffer>
    <experiments>14</experiments>
</comment>
<comment type="subcellular location">
    <subcellularLocation>
        <location evidence="5">Mitochondrion inner membrane</location>
        <topology evidence="5">Multi-pass membrane protein</topology>
    </subcellularLocation>
    <text>Around 20 amino acids of the N-terminus are believed to span the mitochondrial outer membrane. This association is dynamic and depends on the translocation activity of the TIM23 complex. However, this topology seems not to be critical for formation of a TOM-TIM supercomplex and preprotein import.</text>
</comment>
<comment type="miscellaneous">
    <text evidence="3">Present with 1440 molecules/cell in log phase SD medium.</text>
</comment>
<comment type="similarity">
    <text evidence="6">Belongs to the Tim17/Tim22/Tim23 family.</text>
</comment>
<feature type="chain" id="PRO_0000210307" description="Mitochondrial import inner membrane translocase subunit TIM23">
    <location>
        <begin position="1"/>
        <end position="222"/>
    </location>
</feature>
<feature type="transmembrane region" description="Helical; Note=Outer membrane" evidence="1">
    <location>
        <begin position="1"/>
        <end status="unknown"/>
    </location>
</feature>
<feature type="topological domain" description="Mitochondrial intermembrane" evidence="1">
    <location>
        <begin status="unknown"/>
        <end position="96"/>
    </location>
</feature>
<feature type="transmembrane region" description="Helical; Note=Inner membrane" evidence="1">
    <location>
        <begin position="97"/>
        <end position="118"/>
    </location>
</feature>
<feature type="topological domain" description="Mitochondrial matrix" evidence="1">
    <location>
        <begin position="119"/>
        <end position="144"/>
    </location>
</feature>
<feature type="transmembrane region" description="Helical; Note=Inner membrane" evidence="1">
    <location>
        <begin position="145"/>
        <end position="166"/>
    </location>
</feature>
<feature type="topological domain" description="Mitochondrial intermembrane" evidence="1">
    <location>
        <begin position="167"/>
        <end position="174"/>
    </location>
</feature>
<feature type="transmembrane region" description="Helical; Note=Inner membrane" evidence="1">
    <location>
        <begin position="175"/>
        <end position="189"/>
    </location>
</feature>
<feature type="topological domain" description="Mitochondrial matrix" evidence="1">
    <location>
        <begin position="190"/>
        <end position="196"/>
    </location>
</feature>
<feature type="transmembrane region" description="Helical; Note=Inner membrane" evidence="1">
    <location>
        <begin position="197"/>
        <end position="215"/>
    </location>
</feature>
<feature type="topological domain" description="Mitochondrial intermembrane" evidence="1">
    <location>
        <begin position="216"/>
        <end position="222"/>
    </location>
</feature>
<feature type="region of interest" description="Disordered" evidence="2">
    <location>
        <begin position="1"/>
        <end position="25"/>
    </location>
</feature>
<feature type="turn" evidence="7">
    <location>
        <begin position="4"/>
        <end position="6"/>
    </location>
</feature>
<feature type="helix" evidence="7">
    <location>
        <begin position="12"/>
        <end position="16"/>
    </location>
</feature>
<feature type="helix" evidence="7">
    <location>
        <begin position="30"/>
        <end position="33"/>
    </location>
</feature>
<feature type="helix" evidence="7">
    <location>
        <begin position="39"/>
        <end position="43"/>
    </location>
</feature>
<feature type="turn" evidence="7">
    <location>
        <begin position="56"/>
        <end position="58"/>
    </location>
</feature>
<feature type="helix" evidence="7">
    <location>
        <begin position="63"/>
        <end position="82"/>
    </location>
</feature>
<feature type="helix" evidence="8">
    <location>
        <begin position="93"/>
        <end position="122"/>
    </location>
</feature>
<feature type="helix" evidence="8">
    <location>
        <begin position="130"/>
        <end position="168"/>
    </location>
</feature>
<feature type="helix" evidence="8">
    <location>
        <begin position="175"/>
        <end position="189"/>
    </location>
</feature>
<feature type="turn" evidence="8">
    <location>
        <begin position="190"/>
        <end position="193"/>
    </location>
</feature>
<feature type="helix" evidence="8">
    <location>
        <begin position="196"/>
        <end position="219"/>
    </location>
</feature>
<organism>
    <name type="scientific">Saccharomyces cerevisiae (strain ATCC 204508 / S288c)</name>
    <name type="common">Baker's yeast</name>
    <dbReference type="NCBI Taxonomy" id="559292"/>
    <lineage>
        <taxon>Eukaryota</taxon>
        <taxon>Fungi</taxon>
        <taxon>Dikarya</taxon>
        <taxon>Ascomycota</taxon>
        <taxon>Saccharomycotina</taxon>
        <taxon>Saccharomycetes</taxon>
        <taxon>Saccharomycetales</taxon>
        <taxon>Saccharomycetaceae</taxon>
        <taxon>Saccharomyces</taxon>
    </lineage>
</organism>
<keyword id="KW-0002">3D-structure</keyword>
<keyword id="KW-0472">Membrane</keyword>
<keyword id="KW-0496">Mitochondrion</keyword>
<keyword id="KW-0999">Mitochondrion inner membrane</keyword>
<keyword id="KW-0653">Protein transport</keyword>
<keyword id="KW-1185">Reference proteome</keyword>
<keyword id="KW-0811">Translocation</keyword>
<keyword id="KW-0812">Transmembrane</keyword>
<keyword id="KW-1133">Transmembrane helix</keyword>
<keyword id="KW-0813">Transport</keyword>
<sequence>MSWLFGDKTPTDDANAAVGGQDTTKPKELSLKQSLGFEPNINNIISGPGGMHVDTARLHPLAGLDKGVEYLDLEEEQLSSLEGSQGLIPSRGWTDDLCYGTGAVYLLGLGIGGFSGMMQGLQNIPPNSPGKLQLNTVLNHITKRGPFLGNNAGILALSYNIINSTIDALRGKHDTAGSIGAGALTGALFKSSKGLKPMGYSSAMVAAACAVWCSVKKRLLEK</sequence>
<dbReference type="EMBL" id="X71633">
    <property type="protein sequence ID" value="CAA50640.1"/>
    <property type="molecule type" value="Genomic_DNA"/>
</dbReference>
<dbReference type="EMBL" id="X74161">
    <property type="protein sequence ID" value="CAA52274.1"/>
    <property type="molecule type" value="Genomic_DNA"/>
</dbReference>
<dbReference type="EMBL" id="Z71632">
    <property type="protein sequence ID" value="CAA96296.1"/>
    <property type="molecule type" value="Genomic_DNA"/>
</dbReference>
<dbReference type="EMBL" id="BK006947">
    <property type="protein sequence ID" value="DAA10558.1"/>
    <property type="molecule type" value="Genomic_DNA"/>
</dbReference>
<dbReference type="PIR" id="S36139">
    <property type="entry name" value="S36139"/>
</dbReference>
<dbReference type="RefSeq" id="NP_014414.3">
    <property type="nucleotide sequence ID" value="NM_001183194.3"/>
</dbReference>
<dbReference type="PDB" id="7CLV">
    <property type="method" value="NMR"/>
    <property type="chains" value="A/B=1-222"/>
</dbReference>
<dbReference type="PDB" id="8E1M">
    <property type="method" value="EM"/>
    <property type="resolution" value="2.90 A"/>
    <property type="chains" value="B=1-222"/>
</dbReference>
<dbReference type="PDBsum" id="7CLV"/>
<dbReference type="PDBsum" id="8E1M"/>
<dbReference type="BMRB" id="P32897"/>
<dbReference type="SASBDB" id="P32897"/>
<dbReference type="SMR" id="P32897"/>
<dbReference type="BioGRID" id="35842">
    <property type="interactions" value="650"/>
</dbReference>
<dbReference type="ComplexPortal" id="CPX-539">
    <property type="entry name" value="TIM23 mitochondrial inner membrane pre-sequence translocase complex, motor variant"/>
</dbReference>
<dbReference type="ComplexPortal" id="CPX-6127">
    <property type="entry name" value="TIM23 mitochondrial inner membrane pre-sequence translocase complex, sort variant"/>
</dbReference>
<dbReference type="DIP" id="DIP-2451N"/>
<dbReference type="FunCoup" id="P32897">
    <property type="interactions" value="745"/>
</dbReference>
<dbReference type="IntAct" id="P32897">
    <property type="interactions" value="36"/>
</dbReference>
<dbReference type="MINT" id="P32897"/>
<dbReference type="STRING" id="4932.YNR017W"/>
<dbReference type="BindingDB" id="P32897"/>
<dbReference type="ChEMBL" id="CHEMBL1741180"/>
<dbReference type="TCDB" id="3.A.8.1.1">
    <property type="family name" value="the mitochondrial protein translocase (mpt) family"/>
</dbReference>
<dbReference type="iPTMnet" id="P32897"/>
<dbReference type="PaxDb" id="4932-YNR017W"/>
<dbReference type="PeptideAtlas" id="P32897"/>
<dbReference type="EnsemblFungi" id="YNR017W_mRNA">
    <property type="protein sequence ID" value="YNR017W"/>
    <property type="gene ID" value="YNR017W"/>
</dbReference>
<dbReference type="GeneID" id="855751"/>
<dbReference type="KEGG" id="sce:YNR017W"/>
<dbReference type="AGR" id="SGD:S000005300"/>
<dbReference type="SGD" id="S000005300">
    <property type="gene designation" value="TIM23"/>
</dbReference>
<dbReference type="VEuPathDB" id="FungiDB:YNR017W"/>
<dbReference type="eggNOG" id="KOG3324">
    <property type="taxonomic scope" value="Eukaryota"/>
</dbReference>
<dbReference type="GeneTree" id="ENSGT00390000001094"/>
<dbReference type="HOGENOM" id="CLU_063935_1_1_1"/>
<dbReference type="InParanoid" id="P32897"/>
<dbReference type="OMA" id="QYIMPEG"/>
<dbReference type="OrthoDB" id="159299at2759"/>
<dbReference type="BioCyc" id="YEAST:G3O-33332-MONOMER"/>
<dbReference type="Reactome" id="R-SCE-1268020">
    <property type="pathway name" value="Mitochondrial protein import"/>
</dbReference>
<dbReference type="BioGRID-ORCS" id="855751">
    <property type="hits" value="4 hits in 10 CRISPR screens"/>
</dbReference>
<dbReference type="PRO" id="PR:P32897"/>
<dbReference type="Proteomes" id="UP000002311">
    <property type="component" value="Chromosome XIV"/>
</dbReference>
<dbReference type="RNAct" id="P32897">
    <property type="molecule type" value="protein"/>
</dbReference>
<dbReference type="GO" id="GO:0005743">
    <property type="term" value="C:mitochondrial inner membrane"/>
    <property type="evidence" value="ECO:0000304"/>
    <property type="project" value="Reactome"/>
</dbReference>
<dbReference type="GO" id="GO:0005758">
    <property type="term" value="C:mitochondrial intermembrane space"/>
    <property type="evidence" value="ECO:0000304"/>
    <property type="project" value="Reactome"/>
</dbReference>
<dbReference type="GO" id="GO:0005739">
    <property type="term" value="C:mitochondrion"/>
    <property type="evidence" value="ECO:0007005"/>
    <property type="project" value="SGD"/>
</dbReference>
<dbReference type="GO" id="GO:0005744">
    <property type="term" value="C:TIM23 mitochondrial import inner membrane translocase complex"/>
    <property type="evidence" value="ECO:0000353"/>
    <property type="project" value="SGD"/>
</dbReference>
<dbReference type="GO" id="GO:0030943">
    <property type="term" value="F:mitochondrion targeting sequence binding"/>
    <property type="evidence" value="ECO:0000314"/>
    <property type="project" value="SGD"/>
</dbReference>
<dbReference type="GO" id="GO:0008320">
    <property type="term" value="F:protein transmembrane transporter activity"/>
    <property type="evidence" value="ECO:0000314"/>
    <property type="project" value="SGD"/>
</dbReference>
<dbReference type="GO" id="GO:0006886">
    <property type="term" value="P:intracellular protein transport"/>
    <property type="evidence" value="ECO:0000303"/>
    <property type="project" value="ComplexPortal"/>
</dbReference>
<dbReference type="GO" id="GO:0030150">
    <property type="term" value="P:protein import into mitochondrial matrix"/>
    <property type="evidence" value="ECO:0000315"/>
    <property type="project" value="SGD"/>
</dbReference>
<dbReference type="GO" id="GO:0045039">
    <property type="term" value="P:protein insertion into mitochondrial inner membrane"/>
    <property type="evidence" value="ECO:0000303"/>
    <property type="project" value="ComplexPortal"/>
</dbReference>
<dbReference type="InterPro" id="IPR005681">
    <property type="entry name" value="Tim23"/>
</dbReference>
<dbReference type="InterPro" id="IPR045238">
    <property type="entry name" value="Tim23-like"/>
</dbReference>
<dbReference type="NCBIfam" id="TIGR00983">
    <property type="entry name" value="3a0801s02tim23"/>
    <property type="match status" value="1"/>
</dbReference>
<dbReference type="PANTHER" id="PTHR15371:SF0">
    <property type="entry name" value="SD19278P"/>
    <property type="match status" value="1"/>
</dbReference>
<dbReference type="PANTHER" id="PTHR15371">
    <property type="entry name" value="TIM23"/>
    <property type="match status" value="1"/>
</dbReference>
<dbReference type="Pfam" id="PF02466">
    <property type="entry name" value="Tim17"/>
    <property type="match status" value="1"/>
</dbReference>
<accession>P32897</accession>
<accession>D6W1J2</accession>
<evidence type="ECO:0000255" key="1"/>
<evidence type="ECO:0000256" key="2">
    <source>
        <dbReference type="SAM" id="MobiDB-lite"/>
    </source>
</evidence>
<evidence type="ECO:0000269" key="3">
    <source>
    </source>
</evidence>
<evidence type="ECO:0000269" key="4">
    <source>
    </source>
</evidence>
<evidence type="ECO:0000269" key="5">
    <source>
    </source>
</evidence>
<evidence type="ECO:0000305" key="6"/>
<evidence type="ECO:0007829" key="7">
    <source>
        <dbReference type="PDB" id="7CLV"/>
    </source>
</evidence>
<evidence type="ECO:0007829" key="8">
    <source>
        <dbReference type="PDB" id="8E1M"/>
    </source>
</evidence>
<reference key="1">
    <citation type="journal article" date="1993" name="J. Cell Biol.">
        <title>MAS6 encodes an essential inner membrane component of the yeast mitochondrial protein import pathway.</title>
        <authorList>
            <person name="Emtage J.L.T."/>
            <person name="Jensen R.E."/>
        </authorList>
    </citation>
    <scope>NUCLEOTIDE SEQUENCE [GENOMIC DNA]</scope>
</reference>
<reference key="2">
    <citation type="journal article" date="1993" name="FEBS Lett.">
        <title>Identification of MIM23, a putative component of the protein import machinery of the mitochondrial inner membrane.</title>
        <authorList>
            <person name="Dekker P.J.T."/>
            <person name="Keil P."/>
            <person name="Rassow J."/>
            <person name="Maarse A.C."/>
            <person name="Pfanner N."/>
            <person name="Meijer M."/>
        </authorList>
    </citation>
    <scope>NUCLEOTIDE SEQUENCE [GENOMIC DNA]</scope>
</reference>
<reference key="3">
    <citation type="journal article" date="1997" name="Nature">
        <title>The nucleotide sequence of Saccharomyces cerevisiae chromosome XIV and its evolutionary implications.</title>
        <authorList>
            <person name="Philippsen P."/>
            <person name="Kleine K."/>
            <person name="Poehlmann R."/>
            <person name="Duesterhoeft A."/>
            <person name="Hamberg K."/>
            <person name="Hegemann J.H."/>
            <person name="Obermaier B."/>
            <person name="Urrestarazu L.A."/>
            <person name="Aert R."/>
            <person name="Albermann K."/>
            <person name="Altmann R."/>
            <person name="Andre B."/>
            <person name="Baladron V."/>
            <person name="Ballesta J.P.G."/>
            <person name="Becam A.-M."/>
            <person name="Beinhauer J.D."/>
            <person name="Boskovic J."/>
            <person name="Buitrago M.J."/>
            <person name="Bussereau F."/>
            <person name="Coster F."/>
            <person name="Crouzet M."/>
            <person name="D'Angelo M."/>
            <person name="Dal Pero F."/>
            <person name="De Antoni A."/>
            <person name="del Rey F."/>
            <person name="Doignon F."/>
            <person name="Domdey H."/>
            <person name="Dubois E."/>
            <person name="Fiedler T.A."/>
            <person name="Fleig U."/>
            <person name="Floeth M."/>
            <person name="Fritz C."/>
            <person name="Gaillardin C."/>
            <person name="Garcia-Cantalejo J.M."/>
            <person name="Glansdorff N."/>
            <person name="Goffeau A."/>
            <person name="Gueldener U."/>
            <person name="Herbert C.J."/>
            <person name="Heumann K."/>
            <person name="Heuss-Neitzel D."/>
            <person name="Hilbert H."/>
            <person name="Hinni K."/>
            <person name="Iraqui Houssaini I."/>
            <person name="Jacquet M."/>
            <person name="Jimenez A."/>
            <person name="Jonniaux J.-L."/>
            <person name="Karpfinger-Hartl L."/>
            <person name="Lanfranchi G."/>
            <person name="Lepingle A."/>
            <person name="Levesque H."/>
            <person name="Lyck R."/>
            <person name="Maftahi M."/>
            <person name="Mallet L."/>
            <person name="Maurer C.T.C."/>
            <person name="Messenguy F."/>
            <person name="Mewes H.-W."/>
            <person name="Moestl D."/>
            <person name="Nasr F."/>
            <person name="Nicaud J.-M."/>
            <person name="Niedenthal R.K."/>
            <person name="Pandolfo D."/>
            <person name="Pierard A."/>
            <person name="Piravandi E."/>
            <person name="Planta R.J."/>
            <person name="Pohl T.M."/>
            <person name="Purnelle B."/>
            <person name="Rebischung C."/>
            <person name="Remacha M.A."/>
            <person name="Revuelta J.L."/>
            <person name="Rinke M."/>
            <person name="Saiz J.E."/>
            <person name="Sartorello F."/>
            <person name="Scherens B."/>
            <person name="Sen-Gupta M."/>
            <person name="Soler-Mira A."/>
            <person name="Urbanus J.H.M."/>
            <person name="Valle G."/>
            <person name="Van Dyck L."/>
            <person name="Verhasselt P."/>
            <person name="Vierendeels F."/>
            <person name="Vissers S."/>
            <person name="Voet M."/>
            <person name="Volckaert G."/>
            <person name="Wach A."/>
            <person name="Wambutt R."/>
            <person name="Wedler H."/>
            <person name="Zollner A."/>
            <person name="Hani J."/>
        </authorList>
    </citation>
    <scope>NUCLEOTIDE SEQUENCE [LARGE SCALE GENOMIC DNA]</scope>
    <source>
        <strain>ATCC 204508 / S288c</strain>
    </source>
</reference>
<reference key="4">
    <citation type="journal article" date="2014" name="G3 (Bethesda)">
        <title>The reference genome sequence of Saccharomyces cerevisiae: Then and now.</title>
        <authorList>
            <person name="Engel S.R."/>
            <person name="Dietrich F.S."/>
            <person name="Fisk D.G."/>
            <person name="Binkley G."/>
            <person name="Balakrishnan R."/>
            <person name="Costanzo M.C."/>
            <person name="Dwight S.S."/>
            <person name="Hitz B.C."/>
            <person name="Karra K."/>
            <person name="Nash R.S."/>
            <person name="Weng S."/>
            <person name="Wong E.D."/>
            <person name="Lloyd P."/>
            <person name="Skrzypek M.S."/>
            <person name="Miyasato S.R."/>
            <person name="Simison M."/>
            <person name="Cherry J.M."/>
        </authorList>
    </citation>
    <scope>GENOME REANNOTATION</scope>
    <source>
        <strain>ATCC 204508 / S288c</strain>
    </source>
</reference>
<reference key="5">
    <citation type="journal article" date="1994" name="FEBS Lett.">
        <title>The polytopic mitochondrial inner membrane proteins MIM17 and MIM23 operate at the same preprotein import site.</title>
        <authorList>
            <person name="Kuebrich M."/>
            <person name="Keil P."/>
            <person name="Rassow J."/>
            <person name="Dekker P.J.T."/>
            <person name="Blom J."/>
            <person name="Meijer M."/>
            <person name="Pfanner N."/>
        </authorList>
    </citation>
    <scope>CHARACTERIZATION</scope>
    <scope>TOPOLOGY</scope>
</reference>
<reference key="6">
    <citation type="journal article" date="2000" name="Cell">
        <title>Tim23 links the inner and outer mitochondrial membranes.</title>
        <authorList>
            <person name="Donzeau M."/>
            <person name="Kaldi K."/>
            <person name="Adam A."/>
            <person name="Paschen S."/>
            <person name="Wanner G."/>
            <person name="Guiard B."/>
            <person name="Bauer M.F."/>
            <person name="Neupert W."/>
            <person name="Brunner M."/>
        </authorList>
    </citation>
    <scope>TOPOLOGY</scope>
</reference>
<reference key="7">
    <citation type="journal article" date="2003" name="Nature">
        <title>Global analysis of protein expression in yeast.</title>
        <authorList>
            <person name="Ghaemmaghami S."/>
            <person name="Huh W.-K."/>
            <person name="Bower K."/>
            <person name="Howson R.W."/>
            <person name="Belle A."/>
            <person name="Dephoure N."/>
            <person name="O'Shea E.K."/>
            <person name="Weissman J.S."/>
        </authorList>
    </citation>
    <scope>LEVEL OF PROTEIN EXPRESSION [LARGE SCALE ANALYSIS]</scope>
</reference>
<reference key="8">
    <citation type="journal article" date="2005" name="Cell">
        <title>Mitochondrial presequence translocase: switching between TOM tethering and motor recruitment involves Tim21 and Tim17.</title>
        <authorList>
            <person name="Chacinska A."/>
            <person name="Lind M."/>
            <person name="Frazier A.E."/>
            <person name="Dudek J."/>
            <person name="Meisinger C."/>
            <person name="Geissler A."/>
            <person name="Sickmann A."/>
            <person name="Meyer H.E."/>
            <person name="Truscott K.N."/>
            <person name="Guiard B."/>
            <person name="Pfanner N."/>
            <person name="Rehling P."/>
        </authorList>
    </citation>
    <scope>IDENTIFICATION IN THE TIM23 COMPLEX</scope>
</reference>
<reference key="9">
    <citation type="journal article" date="2008" name="EMBO J.">
        <title>Active remodelling of the TIM23 complex during translocation of preproteins into mitochondria.</title>
        <authorList>
            <person name="Popov-Celeketic D."/>
            <person name="Mapa K."/>
            <person name="Neupert W."/>
            <person name="Mokranjac D."/>
        </authorList>
    </citation>
    <scope>SUBCELLULAR LOCATION</scope>
    <scope>TOPOLOGY</scope>
</reference>
<gene>
    <name type="primary">TIM23</name>
    <name type="synonym">MAS6</name>
    <name type="synonym">MIM23</name>
    <name type="synonym">MPI3</name>
    <name type="ordered locus">YNR017W</name>
    <name type="ORF">N3180</name>
</gene>
<proteinExistence type="evidence at protein level"/>